<reference key="1">
    <citation type="journal article" date="2005" name="Nucleic Acids Res.">
        <title>Genome dynamics and diversity of Shigella species, the etiologic agents of bacillary dysentery.</title>
        <authorList>
            <person name="Yang F."/>
            <person name="Yang J."/>
            <person name="Zhang X."/>
            <person name="Chen L."/>
            <person name="Jiang Y."/>
            <person name="Yan Y."/>
            <person name="Tang X."/>
            <person name="Wang J."/>
            <person name="Xiong Z."/>
            <person name="Dong J."/>
            <person name="Xue Y."/>
            <person name="Zhu Y."/>
            <person name="Xu X."/>
            <person name="Sun L."/>
            <person name="Chen S."/>
            <person name="Nie H."/>
            <person name="Peng J."/>
            <person name="Xu J."/>
            <person name="Wang Y."/>
            <person name="Yuan Z."/>
            <person name="Wen Y."/>
            <person name="Yao Z."/>
            <person name="Shen Y."/>
            <person name="Qiang B."/>
            <person name="Hou Y."/>
            <person name="Yu J."/>
            <person name="Jin Q."/>
        </authorList>
    </citation>
    <scope>NUCLEOTIDE SEQUENCE [LARGE SCALE GENOMIC DNA]</scope>
    <source>
        <strain>Ss046</strain>
    </source>
</reference>
<feature type="chain" id="PRO_0000242304" description="Phosphomethylpyrimidine synthase">
    <location>
        <begin position="1"/>
        <end position="631"/>
    </location>
</feature>
<feature type="binding site" evidence="1">
    <location>
        <position position="239"/>
    </location>
    <ligand>
        <name>substrate</name>
    </ligand>
</feature>
<feature type="binding site" evidence="1">
    <location>
        <position position="268"/>
    </location>
    <ligand>
        <name>substrate</name>
    </ligand>
</feature>
<feature type="binding site" evidence="1">
    <location>
        <position position="297"/>
    </location>
    <ligand>
        <name>substrate</name>
    </ligand>
</feature>
<feature type="binding site" evidence="1">
    <location>
        <position position="333"/>
    </location>
    <ligand>
        <name>substrate</name>
    </ligand>
</feature>
<feature type="binding site" evidence="1">
    <location>
        <begin position="353"/>
        <end position="355"/>
    </location>
    <ligand>
        <name>substrate</name>
    </ligand>
</feature>
<feature type="binding site" evidence="1">
    <location>
        <begin position="394"/>
        <end position="397"/>
    </location>
    <ligand>
        <name>substrate</name>
    </ligand>
</feature>
<feature type="binding site" evidence="1">
    <location>
        <position position="433"/>
    </location>
    <ligand>
        <name>substrate</name>
    </ligand>
</feature>
<feature type="binding site" evidence="1">
    <location>
        <position position="437"/>
    </location>
    <ligand>
        <name>Zn(2+)</name>
        <dbReference type="ChEBI" id="CHEBI:29105"/>
    </ligand>
</feature>
<feature type="binding site" evidence="1">
    <location>
        <position position="460"/>
    </location>
    <ligand>
        <name>substrate</name>
    </ligand>
</feature>
<feature type="binding site" evidence="1">
    <location>
        <position position="501"/>
    </location>
    <ligand>
        <name>Zn(2+)</name>
        <dbReference type="ChEBI" id="CHEBI:29105"/>
    </ligand>
</feature>
<feature type="binding site" evidence="1">
    <location>
        <position position="581"/>
    </location>
    <ligand>
        <name>[4Fe-4S] cluster</name>
        <dbReference type="ChEBI" id="CHEBI:49883"/>
        <note>4Fe-4S-S-AdoMet</note>
    </ligand>
</feature>
<feature type="binding site" evidence="1">
    <location>
        <position position="584"/>
    </location>
    <ligand>
        <name>[4Fe-4S] cluster</name>
        <dbReference type="ChEBI" id="CHEBI:49883"/>
        <note>4Fe-4S-S-AdoMet</note>
    </ligand>
</feature>
<feature type="binding site" evidence="1">
    <location>
        <position position="589"/>
    </location>
    <ligand>
        <name>[4Fe-4S] cluster</name>
        <dbReference type="ChEBI" id="CHEBI:49883"/>
        <note>4Fe-4S-S-AdoMet</note>
    </ligand>
</feature>
<dbReference type="EC" id="4.1.99.17" evidence="1"/>
<dbReference type="EMBL" id="CP000038">
    <property type="protein sequence ID" value="AAZ90672.1"/>
    <property type="molecule type" value="Genomic_DNA"/>
</dbReference>
<dbReference type="RefSeq" id="WP_001276931.1">
    <property type="nucleotide sequence ID" value="NC_007384.1"/>
</dbReference>
<dbReference type="SMR" id="Q3YUZ0"/>
<dbReference type="KEGG" id="ssn:SSON_4167"/>
<dbReference type="HOGENOM" id="CLU_013181_2_1_6"/>
<dbReference type="UniPathway" id="UPA00060"/>
<dbReference type="Proteomes" id="UP000002529">
    <property type="component" value="Chromosome"/>
</dbReference>
<dbReference type="GO" id="GO:0005829">
    <property type="term" value="C:cytosol"/>
    <property type="evidence" value="ECO:0007669"/>
    <property type="project" value="TreeGrafter"/>
</dbReference>
<dbReference type="GO" id="GO:0051539">
    <property type="term" value="F:4 iron, 4 sulfur cluster binding"/>
    <property type="evidence" value="ECO:0007669"/>
    <property type="project" value="UniProtKB-KW"/>
</dbReference>
<dbReference type="GO" id="GO:0016830">
    <property type="term" value="F:carbon-carbon lyase activity"/>
    <property type="evidence" value="ECO:0007669"/>
    <property type="project" value="InterPro"/>
</dbReference>
<dbReference type="GO" id="GO:0008270">
    <property type="term" value="F:zinc ion binding"/>
    <property type="evidence" value="ECO:0007669"/>
    <property type="project" value="UniProtKB-UniRule"/>
</dbReference>
<dbReference type="GO" id="GO:0009228">
    <property type="term" value="P:thiamine biosynthetic process"/>
    <property type="evidence" value="ECO:0007669"/>
    <property type="project" value="UniProtKB-KW"/>
</dbReference>
<dbReference type="GO" id="GO:0009229">
    <property type="term" value="P:thiamine diphosphate biosynthetic process"/>
    <property type="evidence" value="ECO:0007669"/>
    <property type="project" value="UniProtKB-UniRule"/>
</dbReference>
<dbReference type="FunFam" id="3.20.20.540:FF:000001">
    <property type="entry name" value="Phosphomethylpyrimidine synthase"/>
    <property type="match status" value="1"/>
</dbReference>
<dbReference type="Gene3D" id="6.10.250.620">
    <property type="match status" value="1"/>
</dbReference>
<dbReference type="Gene3D" id="3.20.20.540">
    <property type="entry name" value="Radical SAM ThiC family, central domain"/>
    <property type="match status" value="1"/>
</dbReference>
<dbReference type="HAMAP" id="MF_00089">
    <property type="entry name" value="ThiC"/>
    <property type="match status" value="1"/>
</dbReference>
<dbReference type="InterPro" id="IPR037509">
    <property type="entry name" value="ThiC"/>
</dbReference>
<dbReference type="InterPro" id="IPR025747">
    <property type="entry name" value="ThiC-associated_dom"/>
</dbReference>
<dbReference type="InterPro" id="IPR038521">
    <property type="entry name" value="ThiC/Bza_core_dom"/>
</dbReference>
<dbReference type="InterPro" id="IPR002817">
    <property type="entry name" value="ThiC/BzaA/B"/>
</dbReference>
<dbReference type="NCBIfam" id="NF006763">
    <property type="entry name" value="PRK09284.1"/>
    <property type="match status" value="1"/>
</dbReference>
<dbReference type="NCBIfam" id="NF009895">
    <property type="entry name" value="PRK13352.1"/>
    <property type="match status" value="1"/>
</dbReference>
<dbReference type="NCBIfam" id="TIGR00190">
    <property type="entry name" value="thiC"/>
    <property type="match status" value="1"/>
</dbReference>
<dbReference type="PANTHER" id="PTHR30557:SF1">
    <property type="entry name" value="PHOSPHOMETHYLPYRIMIDINE SYNTHASE, CHLOROPLASTIC"/>
    <property type="match status" value="1"/>
</dbReference>
<dbReference type="PANTHER" id="PTHR30557">
    <property type="entry name" value="THIAMINE BIOSYNTHESIS PROTEIN THIC"/>
    <property type="match status" value="1"/>
</dbReference>
<dbReference type="Pfam" id="PF13667">
    <property type="entry name" value="ThiC-associated"/>
    <property type="match status" value="1"/>
</dbReference>
<dbReference type="Pfam" id="PF01964">
    <property type="entry name" value="ThiC_Rad_SAM"/>
    <property type="match status" value="1"/>
</dbReference>
<dbReference type="SFLD" id="SFLDF00407">
    <property type="entry name" value="phosphomethylpyrimidine_syntha"/>
    <property type="match status" value="1"/>
</dbReference>
<dbReference type="SFLD" id="SFLDG01114">
    <property type="entry name" value="phosphomethylpyrimidine_syntha"/>
    <property type="match status" value="1"/>
</dbReference>
<dbReference type="SFLD" id="SFLDS00113">
    <property type="entry name" value="Radical_SAM_Phosphomethylpyrim"/>
    <property type="match status" value="1"/>
</dbReference>
<name>THIC_SHISS</name>
<evidence type="ECO:0000255" key="1">
    <source>
        <dbReference type="HAMAP-Rule" id="MF_00089"/>
    </source>
</evidence>
<accession>Q3YUZ0</accession>
<comment type="function">
    <text evidence="1">Catalyzes the synthesis of the hydroxymethylpyrimidine phosphate (HMP-P) moiety of thiamine from aminoimidazole ribotide (AIR) in a radical S-adenosyl-L-methionine (SAM)-dependent reaction.</text>
</comment>
<comment type="catalytic activity">
    <reaction evidence="1">
        <text>5-amino-1-(5-phospho-beta-D-ribosyl)imidazole + S-adenosyl-L-methionine = 4-amino-2-methyl-5-(phosphooxymethyl)pyrimidine + CO + 5'-deoxyadenosine + formate + L-methionine + 3 H(+)</text>
        <dbReference type="Rhea" id="RHEA:24840"/>
        <dbReference type="ChEBI" id="CHEBI:15378"/>
        <dbReference type="ChEBI" id="CHEBI:15740"/>
        <dbReference type="ChEBI" id="CHEBI:17245"/>
        <dbReference type="ChEBI" id="CHEBI:17319"/>
        <dbReference type="ChEBI" id="CHEBI:57844"/>
        <dbReference type="ChEBI" id="CHEBI:58354"/>
        <dbReference type="ChEBI" id="CHEBI:59789"/>
        <dbReference type="ChEBI" id="CHEBI:137981"/>
        <dbReference type="EC" id="4.1.99.17"/>
    </reaction>
</comment>
<comment type="cofactor">
    <cofactor evidence="1">
        <name>[4Fe-4S] cluster</name>
        <dbReference type="ChEBI" id="CHEBI:49883"/>
    </cofactor>
    <text evidence="1">Binds 1 [4Fe-4S] cluster per subunit. The cluster is coordinated with 3 cysteines and an exchangeable S-adenosyl-L-methionine.</text>
</comment>
<comment type="pathway">
    <text evidence="1">Cofactor biosynthesis; thiamine diphosphate biosynthesis.</text>
</comment>
<comment type="subunit">
    <text evidence="1">Homodimer.</text>
</comment>
<comment type="similarity">
    <text evidence="1">Belongs to the ThiC family.</text>
</comment>
<gene>
    <name evidence="1" type="primary">thiC</name>
    <name type="ordered locus">SSON_4167</name>
</gene>
<keyword id="KW-0004">4Fe-4S</keyword>
<keyword id="KW-0408">Iron</keyword>
<keyword id="KW-0411">Iron-sulfur</keyword>
<keyword id="KW-0456">Lyase</keyword>
<keyword id="KW-0479">Metal-binding</keyword>
<keyword id="KW-1185">Reference proteome</keyword>
<keyword id="KW-0949">S-adenosyl-L-methionine</keyword>
<keyword id="KW-0784">Thiamine biosynthesis</keyword>
<keyword id="KW-0862">Zinc</keyword>
<proteinExistence type="inferred from homology"/>
<organism>
    <name type="scientific">Shigella sonnei (strain Ss046)</name>
    <dbReference type="NCBI Taxonomy" id="300269"/>
    <lineage>
        <taxon>Bacteria</taxon>
        <taxon>Pseudomonadati</taxon>
        <taxon>Pseudomonadota</taxon>
        <taxon>Gammaproteobacteria</taxon>
        <taxon>Enterobacterales</taxon>
        <taxon>Enterobacteriaceae</taxon>
        <taxon>Shigella</taxon>
    </lineage>
</organism>
<protein>
    <recommendedName>
        <fullName evidence="1">Phosphomethylpyrimidine synthase</fullName>
        <ecNumber evidence="1">4.1.99.17</ecNumber>
    </recommendedName>
    <alternativeName>
        <fullName evidence="1">Hydroxymethylpyrimidine phosphate synthase</fullName>
        <shortName evidence="1">HMP-P synthase</shortName>
        <shortName evidence="1">HMP-phosphate synthase</shortName>
        <shortName evidence="1">HMPP synthase</shortName>
    </alternativeName>
    <alternativeName>
        <fullName evidence="1">Thiamine biosynthesis protein ThiC</fullName>
    </alternativeName>
</protein>
<sequence>MSATKLTRREQRARAQHFIDTLEGTAFPNSKRIYITGTHPGVRVPMREIQLSPTLIGGSKEQPQYEENEAIPVYDTSGPYGDPQIAINVQQGLAKLRQPWIDARGDTEELTVRSSDYTRTRLADDGLDELRFSGLLTPKRAKTGRRVTQLHYARQGIITPEMEFIAIRENMGRERIRSEVLRHQHPGMSFGAHLPENITAEFVRDEVAAGRAIIPANINHPESEPMIIGRNFLVKVNANIGNSAVTSSIEEEVEKLVWSTRWGADTVMDLSTGRYIHETREWILRNSPVPIGTVPIYQALEKVNGIAEDLTWEAFRDTLLEQAEQGVDYFTIHAGVLLRYVPMTAKRLTGIVSRGGSIMAKWCLSHHQENFLYQHFREICEICAAYDVSLSLGDGLRPGSIQDANDEAQFAELHTLGELTKIAWEYDVQVMIEGPGHVPMQMIRRNMTEELEHCHEAPFYTLGPLTTDIAPGYDHFTSGIGAAMIGWFGCAMLCYVTPKEHLGLPNKEDVKQGLITYKIAVHAADLAKGHPGAQIRDNAMSKARFEFRWEDQFNLALDPFTARAYHDETLPQESGKVAHFCSMCGPKFCSMKISQEVRDYAAAQTIEVGMADMSENFRARGGEIYLRKEEA</sequence>